<sequence length="443" mass="48678">MVMEKLGDSLQGALKKLIGAGRIDERTVNEVVKDIQRALLQADVNVKLVMGMSQRIKERAMKEDPPAGMNPREHVIRIVYQELMEIIGKGADIQLKPQTIMMVGLQGSGKTTSAAKLARYFQRKGLKAGVVAADTFRPGAYHQLKTLSEKLNVGFYGEEGNPDAVEITIHGLKALEKYDIKIVDTAGRHALEADLIEEMERIHAVAKPDHKFMVLDAGIGQQASQQAHAFNDSVGITGVIITKLDGTAKGGGALSAVSETKAPIAFIGVGETPEDFEKFEADRFISRLLGMGDLKSLMEKAEESLSEEDVNVEALMQGRFTLKDMYKQLEAMNKMGPLKQIMSMLPMGMGGLGGVKLSDEMFQATSDKMKNYKVIMDSMTEDEMADPKLIGGSRIKRISRGSGCSPEDVRELLKYHKTMQTALKGFRGGKFNIQKMMKKKMGM</sequence>
<name>SRP54_METMA</name>
<gene>
    <name evidence="1" type="primary">srp54</name>
    <name type="ordered locus">MM_1267</name>
</gene>
<keyword id="KW-0963">Cytoplasm</keyword>
<keyword id="KW-0342">GTP-binding</keyword>
<keyword id="KW-0378">Hydrolase</keyword>
<keyword id="KW-0547">Nucleotide-binding</keyword>
<keyword id="KW-0687">Ribonucleoprotein</keyword>
<keyword id="KW-0694">RNA-binding</keyword>
<keyword id="KW-0733">Signal recognition particle</keyword>
<comment type="function">
    <text evidence="1">Involved in targeting and insertion of nascent membrane proteins into the cytoplasmic membrane. Binds to the hydrophobic signal sequence of the ribosome-nascent chain (RNC) as it emerges from the ribosomes. The SRP-RNC complex is then targeted to the cytoplasmic membrane where it interacts with the SRP receptor FtsY.</text>
</comment>
<comment type="catalytic activity">
    <reaction evidence="1">
        <text>GTP + H2O = GDP + phosphate + H(+)</text>
        <dbReference type="Rhea" id="RHEA:19669"/>
        <dbReference type="ChEBI" id="CHEBI:15377"/>
        <dbReference type="ChEBI" id="CHEBI:15378"/>
        <dbReference type="ChEBI" id="CHEBI:37565"/>
        <dbReference type="ChEBI" id="CHEBI:43474"/>
        <dbReference type="ChEBI" id="CHEBI:58189"/>
        <dbReference type="EC" id="3.6.5.4"/>
    </reaction>
</comment>
<comment type="subunit">
    <text evidence="1">Part of the signal recognition particle protein translocation system, which is composed of SRP and FtsY. Archaeal SRP consists of a 7S RNA molecule of 300 nucleotides and two protein subunits: SRP54 and SRP19.</text>
</comment>
<comment type="subcellular location">
    <subcellularLocation>
        <location evidence="1">Cytoplasm</location>
    </subcellularLocation>
    <text evidence="1">The SRP-RNC complex is targeted to the cytoplasmic membrane.</text>
</comment>
<comment type="domain">
    <text evidence="1">Composed of three domains: the N-terminal N domain, which is responsible for interactions with the ribosome, the central G domain, which binds GTP, and the C-terminal M domain, which binds the RNA and the signal sequence of the RNC.</text>
</comment>
<comment type="similarity">
    <text evidence="1">Belongs to the GTP-binding SRP family. SRP54 subfamily.</text>
</comment>
<reference key="1">
    <citation type="journal article" date="2002" name="J. Mol. Microbiol. Biotechnol.">
        <title>The genome of Methanosarcina mazei: evidence for lateral gene transfer between Bacteria and Archaea.</title>
        <authorList>
            <person name="Deppenmeier U."/>
            <person name="Johann A."/>
            <person name="Hartsch T."/>
            <person name="Merkl R."/>
            <person name="Schmitz R.A."/>
            <person name="Martinez-Arias R."/>
            <person name="Henne A."/>
            <person name="Wiezer A."/>
            <person name="Baeumer S."/>
            <person name="Jacobi C."/>
            <person name="Brueggemann H."/>
            <person name="Lienard T."/>
            <person name="Christmann A."/>
            <person name="Boemecke M."/>
            <person name="Steckel S."/>
            <person name="Bhattacharyya A."/>
            <person name="Lykidis A."/>
            <person name="Overbeek R."/>
            <person name="Klenk H.-P."/>
            <person name="Gunsalus R.P."/>
            <person name="Fritz H.-J."/>
            <person name="Gottschalk G."/>
        </authorList>
    </citation>
    <scope>NUCLEOTIDE SEQUENCE [LARGE SCALE GENOMIC DNA]</scope>
    <source>
        <strain>ATCC BAA-159 / DSM 3647 / Goe1 / Go1 / JCM 11833 / OCM 88</strain>
    </source>
</reference>
<dbReference type="EC" id="3.6.5.4" evidence="1"/>
<dbReference type="EMBL" id="AE008384">
    <property type="protein sequence ID" value="AAM30963.1"/>
    <property type="molecule type" value="Genomic_DNA"/>
</dbReference>
<dbReference type="RefSeq" id="WP_011033214.1">
    <property type="nucleotide sequence ID" value="NC_003901.1"/>
</dbReference>
<dbReference type="SMR" id="Q8PXF3"/>
<dbReference type="KEGG" id="mma:MM_1267"/>
<dbReference type="PATRIC" id="fig|192952.21.peg.1474"/>
<dbReference type="eggNOG" id="arCOG01228">
    <property type="taxonomic scope" value="Archaea"/>
</dbReference>
<dbReference type="HOGENOM" id="CLU_009301_6_0_2"/>
<dbReference type="Proteomes" id="UP000000595">
    <property type="component" value="Chromosome"/>
</dbReference>
<dbReference type="GO" id="GO:0048500">
    <property type="term" value="C:signal recognition particle"/>
    <property type="evidence" value="ECO:0007669"/>
    <property type="project" value="UniProtKB-UniRule"/>
</dbReference>
<dbReference type="GO" id="GO:0008312">
    <property type="term" value="F:7S RNA binding"/>
    <property type="evidence" value="ECO:0007669"/>
    <property type="project" value="UniProtKB-UniRule"/>
</dbReference>
<dbReference type="GO" id="GO:0016887">
    <property type="term" value="F:ATP hydrolysis activity"/>
    <property type="evidence" value="ECO:0007669"/>
    <property type="project" value="InterPro"/>
</dbReference>
<dbReference type="GO" id="GO:0005525">
    <property type="term" value="F:GTP binding"/>
    <property type="evidence" value="ECO:0007669"/>
    <property type="project" value="UniProtKB-UniRule"/>
</dbReference>
<dbReference type="GO" id="GO:0003924">
    <property type="term" value="F:GTPase activity"/>
    <property type="evidence" value="ECO:0007669"/>
    <property type="project" value="UniProtKB-UniRule"/>
</dbReference>
<dbReference type="GO" id="GO:0006614">
    <property type="term" value="P:SRP-dependent cotranslational protein targeting to membrane"/>
    <property type="evidence" value="ECO:0007669"/>
    <property type="project" value="InterPro"/>
</dbReference>
<dbReference type="CDD" id="cd17875">
    <property type="entry name" value="SRP54_G"/>
    <property type="match status" value="1"/>
</dbReference>
<dbReference type="FunFam" id="3.40.50.300:FF:000022">
    <property type="entry name" value="Signal recognition particle 54 kDa subunit"/>
    <property type="match status" value="1"/>
</dbReference>
<dbReference type="Gene3D" id="3.40.50.300">
    <property type="entry name" value="P-loop containing nucleotide triphosphate hydrolases"/>
    <property type="match status" value="1"/>
</dbReference>
<dbReference type="Gene3D" id="1.20.120.140">
    <property type="entry name" value="Signal recognition particle SRP54, nucleotide-binding domain"/>
    <property type="match status" value="1"/>
</dbReference>
<dbReference type="Gene3D" id="1.10.260.30">
    <property type="entry name" value="Signal recognition particle, SRP54 subunit, M-domain"/>
    <property type="match status" value="1"/>
</dbReference>
<dbReference type="HAMAP" id="MF_00306">
    <property type="entry name" value="SRP54"/>
    <property type="match status" value="1"/>
</dbReference>
<dbReference type="InterPro" id="IPR003593">
    <property type="entry name" value="AAA+_ATPase"/>
</dbReference>
<dbReference type="InterPro" id="IPR027417">
    <property type="entry name" value="P-loop_NTPase"/>
</dbReference>
<dbReference type="InterPro" id="IPR036891">
    <property type="entry name" value="Signal_recog_part_SRP54_M_sf"/>
</dbReference>
<dbReference type="InterPro" id="IPR013822">
    <property type="entry name" value="Signal_recog_particl_SRP54_hlx"/>
</dbReference>
<dbReference type="InterPro" id="IPR004125">
    <property type="entry name" value="Signal_recog_particle_SRP54_M"/>
</dbReference>
<dbReference type="InterPro" id="IPR036225">
    <property type="entry name" value="SRP/SRP_N"/>
</dbReference>
<dbReference type="InterPro" id="IPR022941">
    <property type="entry name" value="SRP54"/>
</dbReference>
<dbReference type="InterPro" id="IPR000897">
    <property type="entry name" value="SRP54_GTPase_dom"/>
</dbReference>
<dbReference type="InterPro" id="IPR042101">
    <property type="entry name" value="SRP54_N_sf"/>
</dbReference>
<dbReference type="PANTHER" id="PTHR11564">
    <property type="entry name" value="SIGNAL RECOGNITION PARTICLE 54K PROTEIN SRP54"/>
    <property type="match status" value="1"/>
</dbReference>
<dbReference type="PANTHER" id="PTHR11564:SF5">
    <property type="entry name" value="SIGNAL RECOGNITION PARTICLE SUBUNIT SRP54"/>
    <property type="match status" value="1"/>
</dbReference>
<dbReference type="Pfam" id="PF00448">
    <property type="entry name" value="SRP54"/>
    <property type="match status" value="1"/>
</dbReference>
<dbReference type="Pfam" id="PF02881">
    <property type="entry name" value="SRP54_N"/>
    <property type="match status" value="1"/>
</dbReference>
<dbReference type="Pfam" id="PF02978">
    <property type="entry name" value="SRP_SPB"/>
    <property type="match status" value="1"/>
</dbReference>
<dbReference type="SMART" id="SM00382">
    <property type="entry name" value="AAA"/>
    <property type="match status" value="1"/>
</dbReference>
<dbReference type="SMART" id="SM00962">
    <property type="entry name" value="SRP54"/>
    <property type="match status" value="1"/>
</dbReference>
<dbReference type="SMART" id="SM00963">
    <property type="entry name" value="SRP54_N"/>
    <property type="match status" value="1"/>
</dbReference>
<dbReference type="SUPFAM" id="SSF47364">
    <property type="entry name" value="Domain of the SRP/SRP receptor G-proteins"/>
    <property type="match status" value="1"/>
</dbReference>
<dbReference type="SUPFAM" id="SSF52540">
    <property type="entry name" value="P-loop containing nucleoside triphosphate hydrolases"/>
    <property type="match status" value="1"/>
</dbReference>
<dbReference type="SUPFAM" id="SSF47446">
    <property type="entry name" value="Signal peptide-binding domain"/>
    <property type="match status" value="1"/>
</dbReference>
<dbReference type="PROSITE" id="PS00300">
    <property type="entry name" value="SRP54"/>
    <property type="match status" value="1"/>
</dbReference>
<feature type="chain" id="PRO_0000101179" description="Signal recognition particle 54 kDa protein">
    <location>
        <begin position="1"/>
        <end position="443"/>
    </location>
</feature>
<feature type="binding site" evidence="1">
    <location>
        <begin position="104"/>
        <end position="111"/>
    </location>
    <ligand>
        <name>GTP</name>
        <dbReference type="ChEBI" id="CHEBI:37565"/>
    </ligand>
</feature>
<feature type="binding site" evidence="1">
    <location>
        <begin position="184"/>
        <end position="188"/>
    </location>
    <ligand>
        <name>GTP</name>
        <dbReference type="ChEBI" id="CHEBI:37565"/>
    </ligand>
</feature>
<feature type="binding site" evidence="1">
    <location>
        <begin position="242"/>
        <end position="245"/>
    </location>
    <ligand>
        <name>GTP</name>
        <dbReference type="ChEBI" id="CHEBI:37565"/>
    </ligand>
</feature>
<proteinExistence type="inferred from homology"/>
<protein>
    <recommendedName>
        <fullName evidence="1">Signal recognition particle 54 kDa protein</fullName>
        <shortName evidence="1">SRP54</shortName>
        <ecNumber evidence="1">3.6.5.4</ecNumber>
    </recommendedName>
</protein>
<accession>Q8PXF3</accession>
<organism>
    <name type="scientific">Methanosarcina mazei (strain ATCC BAA-159 / DSM 3647 / Goe1 / Go1 / JCM 11833 / OCM 88)</name>
    <name type="common">Methanosarcina frisia</name>
    <dbReference type="NCBI Taxonomy" id="192952"/>
    <lineage>
        <taxon>Archaea</taxon>
        <taxon>Methanobacteriati</taxon>
        <taxon>Methanobacteriota</taxon>
        <taxon>Stenosarchaea group</taxon>
        <taxon>Methanomicrobia</taxon>
        <taxon>Methanosarcinales</taxon>
        <taxon>Methanosarcinaceae</taxon>
        <taxon>Methanosarcina</taxon>
    </lineage>
</organism>
<evidence type="ECO:0000255" key="1">
    <source>
        <dbReference type="HAMAP-Rule" id="MF_00306"/>
    </source>
</evidence>